<dbReference type="EMBL" id="FO081317">
    <property type="protein sequence ID" value="CCD70755.1"/>
    <property type="molecule type" value="Genomic_DNA"/>
</dbReference>
<dbReference type="PIR" id="T16762">
    <property type="entry name" value="T16762"/>
</dbReference>
<dbReference type="RefSeq" id="NP_498584.1">
    <property type="nucleotide sequence ID" value="NM_066183.7"/>
</dbReference>
<dbReference type="PDB" id="9BH5">
    <property type="method" value="EM"/>
    <property type="resolution" value="2.63 A"/>
    <property type="chains" value="CE=1-217"/>
</dbReference>
<dbReference type="PDB" id="9CAI">
    <property type="method" value="EM"/>
    <property type="resolution" value="2.59 A"/>
    <property type="chains" value="CE=1-217"/>
</dbReference>
<dbReference type="PDBsum" id="9BH5"/>
<dbReference type="PDBsum" id="9CAI"/>
<dbReference type="EMDB" id="EMD-44533"/>
<dbReference type="EMDB" id="EMD-45392"/>
<dbReference type="SMR" id="P47991"/>
<dbReference type="BioGRID" id="41227">
    <property type="interactions" value="97"/>
</dbReference>
<dbReference type="DIP" id="DIP-26565N"/>
<dbReference type="FunCoup" id="P47991">
    <property type="interactions" value="2504"/>
</dbReference>
<dbReference type="IntAct" id="P47991">
    <property type="interactions" value="1"/>
</dbReference>
<dbReference type="STRING" id="6239.R151.3.4"/>
<dbReference type="iPTMnet" id="P47991"/>
<dbReference type="PaxDb" id="6239-R151.3.2"/>
<dbReference type="PeptideAtlas" id="P47991"/>
<dbReference type="EnsemblMetazoa" id="R151.3.1">
    <property type="protein sequence ID" value="R151.3.1"/>
    <property type="gene ID" value="WBGene00004417"/>
</dbReference>
<dbReference type="GeneID" id="176015"/>
<dbReference type="KEGG" id="cel:CELE_R151.3"/>
<dbReference type="UCSC" id="R151.3.1">
    <property type="organism name" value="c. elegans"/>
</dbReference>
<dbReference type="AGR" id="WB:WBGene00004417"/>
<dbReference type="CTD" id="176015"/>
<dbReference type="WormBase" id="R151.3">
    <property type="protein sequence ID" value="CE00744"/>
    <property type="gene ID" value="WBGene00004417"/>
    <property type="gene designation" value="rpl-6"/>
</dbReference>
<dbReference type="eggNOG" id="KOG1694">
    <property type="taxonomic scope" value="Eukaryota"/>
</dbReference>
<dbReference type="GeneTree" id="ENSGT00390000003682"/>
<dbReference type="HOGENOM" id="CLU_066767_0_0_1"/>
<dbReference type="InParanoid" id="P47991"/>
<dbReference type="OMA" id="GPYEVNG"/>
<dbReference type="OrthoDB" id="2436667at2759"/>
<dbReference type="PhylomeDB" id="P47991"/>
<dbReference type="Reactome" id="R-CEL-156827">
    <property type="pathway name" value="L13a-mediated translational silencing of Ceruloplasmin expression"/>
</dbReference>
<dbReference type="Reactome" id="R-CEL-1799339">
    <property type="pathway name" value="SRP-dependent cotranslational protein targeting to membrane"/>
</dbReference>
<dbReference type="Reactome" id="R-CEL-72689">
    <property type="pathway name" value="Formation of a pool of free 40S subunits"/>
</dbReference>
<dbReference type="Reactome" id="R-CEL-72706">
    <property type="pathway name" value="GTP hydrolysis and joining of the 60S ribosomal subunit"/>
</dbReference>
<dbReference type="Reactome" id="R-CEL-975956">
    <property type="pathway name" value="Nonsense Mediated Decay (NMD) independent of the Exon Junction Complex (EJC)"/>
</dbReference>
<dbReference type="Reactome" id="R-CEL-975957">
    <property type="pathway name" value="Nonsense Mediated Decay (NMD) enhanced by the Exon Junction Complex (EJC)"/>
</dbReference>
<dbReference type="PRO" id="PR:P47991"/>
<dbReference type="Proteomes" id="UP000001940">
    <property type="component" value="Chromosome III"/>
</dbReference>
<dbReference type="Bgee" id="WBGene00004417">
    <property type="expression patterns" value="Expressed in larva and 4 other cell types or tissues"/>
</dbReference>
<dbReference type="GO" id="GO:0022625">
    <property type="term" value="C:cytosolic large ribosomal subunit"/>
    <property type="evidence" value="ECO:0000318"/>
    <property type="project" value="GO_Central"/>
</dbReference>
<dbReference type="GO" id="GO:0005791">
    <property type="term" value="C:rough endoplasmic reticulum"/>
    <property type="evidence" value="ECO:0007669"/>
    <property type="project" value="UniProtKB-SubCell"/>
</dbReference>
<dbReference type="GO" id="GO:0003723">
    <property type="term" value="F:RNA binding"/>
    <property type="evidence" value="ECO:0000318"/>
    <property type="project" value="GO_Central"/>
</dbReference>
<dbReference type="GO" id="GO:0003735">
    <property type="term" value="F:structural constituent of ribosome"/>
    <property type="evidence" value="ECO:0000318"/>
    <property type="project" value="GO_Central"/>
</dbReference>
<dbReference type="GO" id="GO:0002181">
    <property type="term" value="P:cytoplasmic translation"/>
    <property type="evidence" value="ECO:0000318"/>
    <property type="project" value="GO_Central"/>
</dbReference>
<dbReference type="GO" id="GO:0008340">
    <property type="term" value="P:determination of adult lifespan"/>
    <property type="evidence" value="ECO:0000315"/>
    <property type="project" value="WormBase"/>
</dbReference>
<dbReference type="CDD" id="cd13156">
    <property type="entry name" value="KOW_RPL6"/>
    <property type="match status" value="1"/>
</dbReference>
<dbReference type="FunFam" id="2.30.30.30:FF:000014">
    <property type="entry name" value="60S ribosomal protein L6"/>
    <property type="match status" value="1"/>
</dbReference>
<dbReference type="Gene3D" id="2.30.30.30">
    <property type="match status" value="1"/>
</dbReference>
<dbReference type="InterPro" id="IPR000915">
    <property type="entry name" value="60S_ribosomal_eL6"/>
</dbReference>
<dbReference type="InterPro" id="IPR014722">
    <property type="entry name" value="Rib_uL2_dom2"/>
</dbReference>
<dbReference type="InterPro" id="IPR049633">
    <property type="entry name" value="Ribosomal_eL6_CS"/>
</dbReference>
<dbReference type="InterPro" id="IPR041997">
    <property type="entry name" value="Ribosomal_eL6_KOW"/>
</dbReference>
<dbReference type="InterPro" id="IPR008991">
    <property type="entry name" value="Translation_prot_SH3-like_sf"/>
</dbReference>
<dbReference type="PANTHER" id="PTHR10715">
    <property type="entry name" value="60S RIBOSOMAL PROTEIN L6"/>
    <property type="match status" value="1"/>
</dbReference>
<dbReference type="PANTHER" id="PTHR10715:SF0">
    <property type="entry name" value="LARGE RIBOSOMAL SUBUNIT PROTEIN EL6"/>
    <property type="match status" value="1"/>
</dbReference>
<dbReference type="Pfam" id="PF01159">
    <property type="entry name" value="Ribosomal_L6e"/>
    <property type="match status" value="1"/>
</dbReference>
<dbReference type="SUPFAM" id="SSF50104">
    <property type="entry name" value="Translation proteins SH3-like domain"/>
    <property type="match status" value="1"/>
</dbReference>
<dbReference type="PROSITE" id="PS01170">
    <property type="entry name" value="RIBOSOMAL_L6E"/>
    <property type="match status" value="1"/>
</dbReference>
<name>RL6_CAEEL</name>
<organism>
    <name type="scientific">Caenorhabditis elegans</name>
    <dbReference type="NCBI Taxonomy" id="6239"/>
    <lineage>
        <taxon>Eukaryota</taxon>
        <taxon>Metazoa</taxon>
        <taxon>Ecdysozoa</taxon>
        <taxon>Nematoda</taxon>
        <taxon>Chromadorea</taxon>
        <taxon>Rhabditida</taxon>
        <taxon>Rhabditina</taxon>
        <taxon>Rhabditomorpha</taxon>
        <taxon>Rhabditoidea</taxon>
        <taxon>Rhabditidae</taxon>
        <taxon>Peloderinae</taxon>
        <taxon>Caenorhabditis</taxon>
    </lineage>
</organism>
<proteinExistence type="evidence at protein level"/>
<comment type="function">
    <text evidence="2">Component of the large ribosomal subunit.</text>
</comment>
<comment type="subunit">
    <text evidence="1 2">Component of the large ribosomal subunit (By similarity). May bind IPO9 with low affinity (By similarity).</text>
</comment>
<comment type="interaction">
    <interactant intactId="EBI-316106">
        <id>P47991</id>
    </interactant>
    <interactant intactId="EBI-3843983">
        <id>Q11184</id>
        <label>let-756</label>
    </interactant>
    <organismsDiffer>false</organismsDiffer>
    <experiments>3</experiments>
</comment>
<comment type="subcellular location">
    <subcellularLocation>
        <location evidence="2">Cytoplasm</location>
        <location evidence="2">Cytosol</location>
    </subcellularLocation>
    <subcellularLocation>
        <location evidence="2">Cytoplasm</location>
    </subcellularLocation>
    <subcellularLocation>
        <location evidence="3">Rough endoplasmic reticulum</location>
    </subcellularLocation>
    <text evidence="2 3">Detected on cytosolic polysomes (By similarity). Detected in ribosomes that are associated with the rough endoplasmic reticulum (By similarity).</text>
</comment>
<comment type="similarity">
    <text evidence="4">Belongs to the eukaryotic ribosomal protein eL6 family.</text>
</comment>
<gene>
    <name type="primary">rpl-6</name>
    <name type="ORF">R151.3</name>
</gene>
<protein>
    <recommendedName>
        <fullName evidence="4">Large ribosomal subunit protein eL6</fullName>
    </recommendedName>
    <alternativeName>
        <fullName>60S ribosomal protein L6</fullName>
    </alternativeName>
</protein>
<reference key="1">
    <citation type="journal article" date="1998" name="Science">
        <title>Genome sequence of the nematode C. elegans: a platform for investigating biology.</title>
        <authorList>
            <consortium name="The C. elegans sequencing consortium"/>
        </authorList>
    </citation>
    <scope>NUCLEOTIDE SEQUENCE [LARGE SCALE GENOMIC DNA]</scope>
    <source>
        <strain>Bristol N2</strain>
    </source>
</reference>
<evidence type="ECO:0000250" key="1">
    <source>
        <dbReference type="UniProtKB" id="P47911"/>
    </source>
</evidence>
<evidence type="ECO:0000250" key="2">
    <source>
        <dbReference type="UniProtKB" id="Q02878"/>
    </source>
</evidence>
<evidence type="ECO:0000250" key="3">
    <source>
        <dbReference type="UniProtKB" id="Q2YGT9"/>
    </source>
</evidence>
<evidence type="ECO:0000305" key="4"/>
<accession>P47991</accession>
<keyword id="KW-0002">3D-structure</keyword>
<keyword id="KW-0963">Cytoplasm</keyword>
<keyword id="KW-0256">Endoplasmic reticulum</keyword>
<keyword id="KW-1185">Reference proteome</keyword>
<keyword id="KW-0687">Ribonucleoprotein</keyword>
<keyword id="KW-0689">Ribosomal protein</keyword>
<sequence>MVGKRNLPVISRNFDLSPGVLRFSASRLRLKKGEKKPKFTKDTSAKLPKLQRNGTKFALGHSKTVTLRKTLTPGTVLIVLAGRHKGKRVVFLKQLPQSGLLLVTGPHKINGFPLRRIGQAFVIATSLKVNVSGVKIPEHINDEYFKRKSTAQKTGKNIFASGKTEYTVSEQRKKDIKTVDAPILAAIKKHPEHKFLFGYLGTRFSLGKNQYPHKMQF</sequence>
<feature type="chain" id="PRO_0000171013" description="Large ribosomal subunit protein eL6">
    <location>
        <begin position="1"/>
        <end position="217"/>
    </location>
</feature>